<feature type="chain" id="PRO_1000063506" description="Histidinol-phosphate aminotransferase">
    <location>
        <begin position="1"/>
        <end position="364"/>
    </location>
</feature>
<feature type="modified residue" description="N6-(pyridoxal phosphate)lysine" evidence="1">
    <location>
        <position position="225"/>
    </location>
</feature>
<comment type="catalytic activity">
    <reaction evidence="1">
        <text>L-histidinol phosphate + 2-oxoglutarate = 3-(imidazol-4-yl)-2-oxopropyl phosphate + L-glutamate</text>
        <dbReference type="Rhea" id="RHEA:23744"/>
        <dbReference type="ChEBI" id="CHEBI:16810"/>
        <dbReference type="ChEBI" id="CHEBI:29985"/>
        <dbReference type="ChEBI" id="CHEBI:57766"/>
        <dbReference type="ChEBI" id="CHEBI:57980"/>
        <dbReference type="EC" id="2.6.1.9"/>
    </reaction>
</comment>
<comment type="cofactor">
    <cofactor evidence="1">
        <name>pyridoxal 5'-phosphate</name>
        <dbReference type="ChEBI" id="CHEBI:597326"/>
    </cofactor>
</comment>
<comment type="pathway">
    <text evidence="1">Amino-acid biosynthesis; L-histidine biosynthesis; L-histidine from 5-phospho-alpha-D-ribose 1-diphosphate: step 7/9.</text>
</comment>
<comment type="subunit">
    <text evidence="1">Homodimer.</text>
</comment>
<comment type="similarity">
    <text evidence="1">Belongs to the class-II pyridoxal-phosphate-dependent aminotransferase family. Histidinol-phosphate aminotransferase subfamily.</text>
</comment>
<organism>
    <name type="scientific">Sulfurovum sp. (strain NBC37-1)</name>
    <dbReference type="NCBI Taxonomy" id="387093"/>
    <lineage>
        <taxon>Bacteria</taxon>
        <taxon>Pseudomonadati</taxon>
        <taxon>Campylobacterota</taxon>
        <taxon>Epsilonproteobacteria</taxon>
        <taxon>Campylobacterales</taxon>
        <taxon>Sulfurovaceae</taxon>
        <taxon>Sulfurovum</taxon>
    </lineage>
</organism>
<keyword id="KW-0028">Amino-acid biosynthesis</keyword>
<keyword id="KW-0032">Aminotransferase</keyword>
<keyword id="KW-0368">Histidine biosynthesis</keyword>
<keyword id="KW-0663">Pyridoxal phosphate</keyword>
<keyword id="KW-0808">Transferase</keyword>
<reference key="1">
    <citation type="journal article" date="2007" name="Proc. Natl. Acad. Sci. U.S.A.">
        <title>Deep-sea vent epsilon-proteobacterial genomes provide insights into emergence of pathogens.</title>
        <authorList>
            <person name="Nakagawa S."/>
            <person name="Takaki Y."/>
            <person name="Shimamura S."/>
            <person name="Reysenbach A.-L."/>
            <person name="Takai K."/>
            <person name="Horikoshi K."/>
        </authorList>
    </citation>
    <scope>NUCLEOTIDE SEQUENCE [LARGE SCALE GENOMIC DNA]</scope>
    <source>
        <strain>NBC37-1</strain>
    </source>
</reference>
<evidence type="ECO:0000255" key="1">
    <source>
        <dbReference type="HAMAP-Rule" id="MF_01023"/>
    </source>
</evidence>
<accession>A6QBY8</accession>
<sequence>MKFNKVLENIQTYEAGKPIELVVREFGIAPKDVVKLASNENPIGTNPAITKVIRSNADIAHLYPDDSMFELKEALSRKFDVEDENIIIGAGSDQVLEFISRALLNEASSVLMSAVTFAMYEIYAKQMGAKIIRTESYEHKYDEFIEAYHTYKPKIIYICTPNNPTGDATSREEVLKIIEGVDKDTLVVVDGAYMEYAAAKDQKHAIAPTDLLKYENVIYLGTFSKAHGLGGMRVGYGIAQAKLIKELYKMRPPFNITTLSLLVAIEACKDDSFVEASIALHQEQIKRYETFAKENGISYIESYTNFITYLFDENLDSTQISDALLKRGVIIRNLASYGMNGVRITIGTEVQNDVFFRHFAEVIS</sequence>
<protein>
    <recommendedName>
        <fullName evidence="1">Histidinol-phosphate aminotransferase</fullName>
        <ecNumber evidence="1">2.6.1.9</ecNumber>
    </recommendedName>
    <alternativeName>
        <fullName evidence="1">Imidazole acetol-phosphate transaminase</fullName>
    </alternativeName>
</protein>
<proteinExistence type="inferred from homology"/>
<gene>
    <name evidence="1" type="primary">hisC</name>
    <name type="ordered locus">SUN_2056</name>
</gene>
<name>HIS8_SULNB</name>
<dbReference type="EC" id="2.6.1.9" evidence="1"/>
<dbReference type="EMBL" id="AP009179">
    <property type="protein sequence ID" value="BAF72997.1"/>
    <property type="molecule type" value="Genomic_DNA"/>
</dbReference>
<dbReference type="RefSeq" id="WP_012083818.1">
    <property type="nucleotide sequence ID" value="NC_009663.1"/>
</dbReference>
<dbReference type="SMR" id="A6QBY8"/>
<dbReference type="STRING" id="387093.SUN_2056"/>
<dbReference type="KEGG" id="sun:SUN_2056"/>
<dbReference type="eggNOG" id="COG0079">
    <property type="taxonomic scope" value="Bacteria"/>
</dbReference>
<dbReference type="HOGENOM" id="CLU_017584_3_3_7"/>
<dbReference type="OrthoDB" id="9813612at2"/>
<dbReference type="UniPathway" id="UPA00031">
    <property type="reaction ID" value="UER00012"/>
</dbReference>
<dbReference type="Proteomes" id="UP000006378">
    <property type="component" value="Chromosome"/>
</dbReference>
<dbReference type="GO" id="GO:0004400">
    <property type="term" value="F:histidinol-phosphate transaminase activity"/>
    <property type="evidence" value="ECO:0007669"/>
    <property type="project" value="UniProtKB-UniRule"/>
</dbReference>
<dbReference type="GO" id="GO:0030170">
    <property type="term" value="F:pyridoxal phosphate binding"/>
    <property type="evidence" value="ECO:0007669"/>
    <property type="project" value="InterPro"/>
</dbReference>
<dbReference type="GO" id="GO:0000105">
    <property type="term" value="P:L-histidine biosynthetic process"/>
    <property type="evidence" value="ECO:0007669"/>
    <property type="project" value="UniProtKB-UniRule"/>
</dbReference>
<dbReference type="CDD" id="cd00609">
    <property type="entry name" value="AAT_like"/>
    <property type="match status" value="1"/>
</dbReference>
<dbReference type="Gene3D" id="3.90.1150.10">
    <property type="entry name" value="Aspartate Aminotransferase, domain 1"/>
    <property type="match status" value="1"/>
</dbReference>
<dbReference type="Gene3D" id="3.40.640.10">
    <property type="entry name" value="Type I PLP-dependent aspartate aminotransferase-like (Major domain)"/>
    <property type="match status" value="1"/>
</dbReference>
<dbReference type="HAMAP" id="MF_01023">
    <property type="entry name" value="HisC_aminotrans_2"/>
    <property type="match status" value="1"/>
</dbReference>
<dbReference type="InterPro" id="IPR004839">
    <property type="entry name" value="Aminotransferase_I/II_large"/>
</dbReference>
<dbReference type="InterPro" id="IPR005861">
    <property type="entry name" value="HisP_aminotrans"/>
</dbReference>
<dbReference type="InterPro" id="IPR050106">
    <property type="entry name" value="HistidinolP_aminotransfase"/>
</dbReference>
<dbReference type="InterPro" id="IPR015424">
    <property type="entry name" value="PyrdxlP-dep_Trfase"/>
</dbReference>
<dbReference type="InterPro" id="IPR015421">
    <property type="entry name" value="PyrdxlP-dep_Trfase_major"/>
</dbReference>
<dbReference type="InterPro" id="IPR015422">
    <property type="entry name" value="PyrdxlP-dep_Trfase_small"/>
</dbReference>
<dbReference type="NCBIfam" id="TIGR01141">
    <property type="entry name" value="hisC"/>
    <property type="match status" value="1"/>
</dbReference>
<dbReference type="PANTHER" id="PTHR43643:SF3">
    <property type="entry name" value="HISTIDINOL-PHOSPHATE AMINOTRANSFERASE"/>
    <property type="match status" value="1"/>
</dbReference>
<dbReference type="PANTHER" id="PTHR43643">
    <property type="entry name" value="HISTIDINOL-PHOSPHATE AMINOTRANSFERASE 2"/>
    <property type="match status" value="1"/>
</dbReference>
<dbReference type="Pfam" id="PF00155">
    <property type="entry name" value="Aminotran_1_2"/>
    <property type="match status" value="1"/>
</dbReference>
<dbReference type="SUPFAM" id="SSF53383">
    <property type="entry name" value="PLP-dependent transferases"/>
    <property type="match status" value="1"/>
</dbReference>